<proteinExistence type="inferred from homology"/>
<organism>
    <name type="scientific">Aliivibrio fischeri (strain ATCC 700601 / ES114)</name>
    <name type="common">Vibrio fischeri</name>
    <dbReference type="NCBI Taxonomy" id="312309"/>
    <lineage>
        <taxon>Bacteria</taxon>
        <taxon>Pseudomonadati</taxon>
        <taxon>Pseudomonadota</taxon>
        <taxon>Gammaproteobacteria</taxon>
        <taxon>Vibrionales</taxon>
        <taxon>Vibrionaceae</taxon>
        <taxon>Aliivibrio</taxon>
    </lineage>
</organism>
<evidence type="ECO:0000255" key="1">
    <source>
        <dbReference type="HAMAP-Rule" id="MF_00255"/>
    </source>
</evidence>
<comment type="catalytic activity">
    <reaction evidence="1">
        <text>tRNA(Gly) + glycine + ATP = glycyl-tRNA(Gly) + AMP + diphosphate</text>
        <dbReference type="Rhea" id="RHEA:16013"/>
        <dbReference type="Rhea" id="RHEA-COMP:9664"/>
        <dbReference type="Rhea" id="RHEA-COMP:9683"/>
        <dbReference type="ChEBI" id="CHEBI:30616"/>
        <dbReference type="ChEBI" id="CHEBI:33019"/>
        <dbReference type="ChEBI" id="CHEBI:57305"/>
        <dbReference type="ChEBI" id="CHEBI:78442"/>
        <dbReference type="ChEBI" id="CHEBI:78522"/>
        <dbReference type="ChEBI" id="CHEBI:456215"/>
        <dbReference type="EC" id="6.1.1.14"/>
    </reaction>
</comment>
<comment type="subunit">
    <text evidence="1">Tetramer of two alpha and two beta subunits.</text>
</comment>
<comment type="subcellular location">
    <subcellularLocation>
        <location evidence="1">Cytoplasm</location>
    </subcellularLocation>
</comment>
<comment type="similarity">
    <text evidence="1">Belongs to the class-II aminoacyl-tRNA synthetase family.</text>
</comment>
<keyword id="KW-0030">Aminoacyl-tRNA synthetase</keyword>
<keyword id="KW-0067">ATP-binding</keyword>
<keyword id="KW-0963">Cytoplasm</keyword>
<keyword id="KW-0436">Ligase</keyword>
<keyword id="KW-0547">Nucleotide-binding</keyword>
<keyword id="KW-0648">Protein biosynthesis</keyword>
<keyword id="KW-1185">Reference proteome</keyword>
<gene>
    <name evidence="1" type="primary">glyS</name>
    <name type="ordered locus">VF_0016</name>
</gene>
<accession>Q5E8Y5</accession>
<sequence length="688" mass="76041">MAKNFLIELGTEELPPTALRSLAEAFASNFEAELKAADLAHQGVKWYATPRRLALKVAELAESQADKVVEKRGPAVSAAFDADGNPTKAAQGWARGNGITVEQADRLKTDKGEWLLHKEEVKGKPVQELVVDFAAKALAGLPIPKAMRWGNSDIQFIRPVKTLTILLGDELIEGSILGVSSARTLRGHRFMGESEFTIDSADQYPAILEERGKVMADYDARKAIILADSEKAAAAVGGKADLEDDLVEEVTSLVEWPVVLTAKFEEEFLKVPSEALVYTMKGDQKYFPVYDENKKLLPNFIFVSNIESKEPRHVIEGNEKVVRPRLADAEFFFNTDRKRPLIDRLPELEQAIFQKQLGTIKDKTDRITELAGYIAEQIGADVEKSQRAGLLAKCDLMTSMVFEFTDTQGVMGMHYATHDGEDEQVALALYEQYMPRFAGDDLPSTDISSAVAMADKLDTLVGIFGIGQAPKGSDPFALRRAALGVLRIIVEKEYNLDLVDLVAKAQSLFGDKLSNANVATDVIDFMLGRFRAWYQDEGFSVDIIQAVLARRPTKPADFDKRVKAVSHFRELDAAESLAAANKRVGNILAKFDGELAQEIDLALLQEDAEKALAEKVEILAEALEPVFAAGNYQEALSRLAELREPVDAFFDNVMVMADDEALKTNRLTLLNKLRNLFLDIADISLLQK</sequence>
<reference key="1">
    <citation type="journal article" date="2005" name="Proc. Natl. Acad. Sci. U.S.A.">
        <title>Complete genome sequence of Vibrio fischeri: a symbiotic bacterium with pathogenic congeners.</title>
        <authorList>
            <person name="Ruby E.G."/>
            <person name="Urbanowski M."/>
            <person name="Campbell J."/>
            <person name="Dunn A."/>
            <person name="Faini M."/>
            <person name="Gunsalus R."/>
            <person name="Lostroh P."/>
            <person name="Lupp C."/>
            <person name="McCann J."/>
            <person name="Millikan D."/>
            <person name="Schaefer A."/>
            <person name="Stabb E."/>
            <person name="Stevens A."/>
            <person name="Visick K."/>
            <person name="Whistler C."/>
            <person name="Greenberg E.P."/>
        </authorList>
    </citation>
    <scope>NUCLEOTIDE SEQUENCE [LARGE SCALE GENOMIC DNA]</scope>
    <source>
        <strain>ATCC 700601 / ES114</strain>
    </source>
</reference>
<feature type="chain" id="PRO_1000006419" description="Glycine--tRNA ligase beta subunit">
    <location>
        <begin position="1"/>
        <end position="688"/>
    </location>
</feature>
<protein>
    <recommendedName>
        <fullName evidence="1">Glycine--tRNA ligase beta subunit</fullName>
        <ecNumber evidence="1">6.1.1.14</ecNumber>
    </recommendedName>
    <alternativeName>
        <fullName evidence="1">Glycyl-tRNA synthetase beta subunit</fullName>
        <shortName evidence="1">GlyRS</shortName>
    </alternativeName>
</protein>
<dbReference type="EC" id="6.1.1.14" evidence="1"/>
<dbReference type="EMBL" id="CP000020">
    <property type="protein sequence ID" value="AAW84511.1"/>
    <property type="molecule type" value="Genomic_DNA"/>
</dbReference>
<dbReference type="RefSeq" id="WP_011260903.1">
    <property type="nucleotide sequence ID" value="NC_006840.2"/>
</dbReference>
<dbReference type="RefSeq" id="YP_203399.1">
    <property type="nucleotide sequence ID" value="NC_006840.2"/>
</dbReference>
<dbReference type="SMR" id="Q5E8Y5"/>
<dbReference type="STRING" id="312309.VF_0016"/>
<dbReference type="EnsemblBacteria" id="AAW84511">
    <property type="protein sequence ID" value="AAW84511"/>
    <property type="gene ID" value="VF_0016"/>
</dbReference>
<dbReference type="GeneID" id="54162645"/>
<dbReference type="KEGG" id="vfi:VF_0016"/>
<dbReference type="PATRIC" id="fig|312309.11.peg.17"/>
<dbReference type="eggNOG" id="COG0751">
    <property type="taxonomic scope" value="Bacteria"/>
</dbReference>
<dbReference type="HOGENOM" id="CLU_007220_2_2_6"/>
<dbReference type="OrthoDB" id="9775440at2"/>
<dbReference type="Proteomes" id="UP000000537">
    <property type="component" value="Chromosome I"/>
</dbReference>
<dbReference type="GO" id="GO:0005829">
    <property type="term" value="C:cytosol"/>
    <property type="evidence" value="ECO:0007669"/>
    <property type="project" value="TreeGrafter"/>
</dbReference>
<dbReference type="GO" id="GO:0004814">
    <property type="term" value="F:arginine-tRNA ligase activity"/>
    <property type="evidence" value="ECO:0007669"/>
    <property type="project" value="InterPro"/>
</dbReference>
<dbReference type="GO" id="GO:0005524">
    <property type="term" value="F:ATP binding"/>
    <property type="evidence" value="ECO:0007669"/>
    <property type="project" value="UniProtKB-UniRule"/>
</dbReference>
<dbReference type="GO" id="GO:0004820">
    <property type="term" value="F:glycine-tRNA ligase activity"/>
    <property type="evidence" value="ECO:0007669"/>
    <property type="project" value="UniProtKB-UniRule"/>
</dbReference>
<dbReference type="GO" id="GO:0006420">
    <property type="term" value="P:arginyl-tRNA aminoacylation"/>
    <property type="evidence" value="ECO:0007669"/>
    <property type="project" value="InterPro"/>
</dbReference>
<dbReference type="GO" id="GO:0006426">
    <property type="term" value="P:glycyl-tRNA aminoacylation"/>
    <property type="evidence" value="ECO:0007669"/>
    <property type="project" value="UniProtKB-UniRule"/>
</dbReference>
<dbReference type="HAMAP" id="MF_00255">
    <property type="entry name" value="Gly_tRNA_synth_beta"/>
    <property type="match status" value="1"/>
</dbReference>
<dbReference type="InterPro" id="IPR008909">
    <property type="entry name" value="DALR_anticod-bd"/>
</dbReference>
<dbReference type="InterPro" id="IPR015944">
    <property type="entry name" value="Gly-tRNA-synth_bsu"/>
</dbReference>
<dbReference type="InterPro" id="IPR006194">
    <property type="entry name" value="Gly-tRNA-synth_heterodimer"/>
</dbReference>
<dbReference type="NCBIfam" id="TIGR00211">
    <property type="entry name" value="glyS"/>
    <property type="match status" value="1"/>
</dbReference>
<dbReference type="PANTHER" id="PTHR30075:SF2">
    <property type="entry name" value="GLYCINE--TRNA LIGASE, CHLOROPLASTIC_MITOCHONDRIAL 2"/>
    <property type="match status" value="1"/>
</dbReference>
<dbReference type="PANTHER" id="PTHR30075">
    <property type="entry name" value="GLYCYL-TRNA SYNTHETASE"/>
    <property type="match status" value="1"/>
</dbReference>
<dbReference type="Pfam" id="PF05746">
    <property type="entry name" value="DALR_1"/>
    <property type="match status" value="1"/>
</dbReference>
<dbReference type="Pfam" id="PF02092">
    <property type="entry name" value="tRNA_synt_2f"/>
    <property type="match status" value="1"/>
</dbReference>
<dbReference type="PRINTS" id="PR01045">
    <property type="entry name" value="TRNASYNTHGB"/>
</dbReference>
<dbReference type="SMART" id="SM00836">
    <property type="entry name" value="DALR_1"/>
    <property type="match status" value="1"/>
</dbReference>
<dbReference type="SUPFAM" id="SSF109604">
    <property type="entry name" value="HD-domain/PDEase-like"/>
    <property type="match status" value="1"/>
</dbReference>
<dbReference type="PROSITE" id="PS50861">
    <property type="entry name" value="AA_TRNA_LIGASE_II_GLYAB"/>
    <property type="match status" value="1"/>
</dbReference>
<name>SYGB_ALIF1</name>